<protein>
    <recommendedName>
        <fullName evidence="1">Probable transaldolase</fullName>
        <ecNumber evidence="1">2.2.1.2</ecNumber>
    </recommendedName>
</protein>
<sequence length="222" mass="23894">MKFFIDTANLDEIRSAAELGVLDGVTTNPSLIAKIVGDPSNFTYGDFKEHIRRICEIVDGPVSAEVTCLKAEEMIAQGEDLAAIHENVVVKCPLTIDGLKAIKHFSASGIRTNATLVFSPNQALLAAKAGADYVSPFVGRLDDISTDGMELVEQIVTIYDNYGYPTEVIVASVRHPQHVVTAAMMGADIATIPYSVIKQLANHPLTDAGLTKFMDDAAVMKK</sequence>
<dbReference type="EC" id="2.2.1.2" evidence="1"/>
<dbReference type="EMBL" id="CP001097">
    <property type="protein sequence ID" value="ACD91498.1"/>
    <property type="molecule type" value="Genomic_DNA"/>
</dbReference>
<dbReference type="RefSeq" id="WP_012467362.1">
    <property type="nucleotide sequence ID" value="NC_010803.1"/>
</dbReference>
<dbReference type="SMR" id="B3EII6"/>
<dbReference type="STRING" id="290315.Clim_2479"/>
<dbReference type="KEGG" id="cli:Clim_2479"/>
<dbReference type="eggNOG" id="COG0176">
    <property type="taxonomic scope" value="Bacteria"/>
</dbReference>
<dbReference type="HOGENOM" id="CLU_079764_0_0_10"/>
<dbReference type="OrthoDB" id="9807051at2"/>
<dbReference type="UniPathway" id="UPA00115">
    <property type="reaction ID" value="UER00414"/>
</dbReference>
<dbReference type="Proteomes" id="UP000008841">
    <property type="component" value="Chromosome"/>
</dbReference>
<dbReference type="GO" id="GO:0005737">
    <property type="term" value="C:cytoplasm"/>
    <property type="evidence" value="ECO:0007669"/>
    <property type="project" value="UniProtKB-SubCell"/>
</dbReference>
<dbReference type="GO" id="GO:0016832">
    <property type="term" value="F:aldehyde-lyase activity"/>
    <property type="evidence" value="ECO:0007669"/>
    <property type="project" value="InterPro"/>
</dbReference>
<dbReference type="GO" id="GO:0004801">
    <property type="term" value="F:transaldolase activity"/>
    <property type="evidence" value="ECO:0007669"/>
    <property type="project" value="UniProtKB-UniRule"/>
</dbReference>
<dbReference type="GO" id="GO:0005975">
    <property type="term" value="P:carbohydrate metabolic process"/>
    <property type="evidence" value="ECO:0007669"/>
    <property type="project" value="InterPro"/>
</dbReference>
<dbReference type="GO" id="GO:0006098">
    <property type="term" value="P:pentose-phosphate shunt"/>
    <property type="evidence" value="ECO:0007669"/>
    <property type="project" value="UniProtKB-UniRule"/>
</dbReference>
<dbReference type="CDD" id="cd00956">
    <property type="entry name" value="Transaldolase_FSA"/>
    <property type="match status" value="1"/>
</dbReference>
<dbReference type="FunFam" id="3.20.20.70:FF:000018">
    <property type="entry name" value="Probable transaldolase"/>
    <property type="match status" value="1"/>
</dbReference>
<dbReference type="Gene3D" id="3.20.20.70">
    <property type="entry name" value="Aldolase class I"/>
    <property type="match status" value="1"/>
</dbReference>
<dbReference type="HAMAP" id="MF_00494">
    <property type="entry name" value="Transaldolase_3b"/>
    <property type="match status" value="1"/>
</dbReference>
<dbReference type="InterPro" id="IPR013785">
    <property type="entry name" value="Aldolase_TIM"/>
</dbReference>
<dbReference type="InterPro" id="IPR001585">
    <property type="entry name" value="TAL/FSA"/>
</dbReference>
<dbReference type="InterPro" id="IPR022999">
    <property type="entry name" value="Transaldolase_3B"/>
</dbReference>
<dbReference type="InterPro" id="IPR004731">
    <property type="entry name" value="Transaldolase_3B/F6P_aldolase"/>
</dbReference>
<dbReference type="InterPro" id="IPR018225">
    <property type="entry name" value="Transaldolase_AS"/>
</dbReference>
<dbReference type="InterPro" id="IPR033919">
    <property type="entry name" value="TSA/FSA_arc/bac"/>
</dbReference>
<dbReference type="NCBIfam" id="TIGR00875">
    <property type="entry name" value="fsa_talC_mipB"/>
    <property type="match status" value="1"/>
</dbReference>
<dbReference type="PANTHER" id="PTHR10683:SF40">
    <property type="entry name" value="FRUCTOSE-6-PHOSPHATE ALDOLASE 1-RELATED"/>
    <property type="match status" value="1"/>
</dbReference>
<dbReference type="PANTHER" id="PTHR10683">
    <property type="entry name" value="TRANSALDOLASE"/>
    <property type="match status" value="1"/>
</dbReference>
<dbReference type="Pfam" id="PF00923">
    <property type="entry name" value="TAL_FSA"/>
    <property type="match status" value="1"/>
</dbReference>
<dbReference type="SUPFAM" id="SSF51569">
    <property type="entry name" value="Aldolase"/>
    <property type="match status" value="1"/>
</dbReference>
<dbReference type="PROSITE" id="PS01054">
    <property type="entry name" value="TRANSALDOLASE_1"/>
    <property type="match status" value="1"/>
</dbReference>
<keyword id="KW-0963">Cytoplasm</keyword>
<keyword id="KW-0570">Pentose shunt</keyword>
<keyword id="KW-0704">Schiff base</keyword>
<keyword id="KW-0808">Transferase</keyword>
<name>TAL_CHLL2</name>
<reference key="1">
    <citation type="submission" date="2008-05" db="EMBL/GenBank/DDBJ databases">
        <title>Complete sequence of Chlorobium limicola DSM 245.</title>
        <authorList>
            <consortium name="US DOE Joint Genome Institute"/>
            <person name="Lucas S."/>
            <person name="Copeland A."/>
            <person name="Lapidus A."/>
            <person name="Glavina del Rio T."/>
            <person name="Dalin E."/>
            <person name="Tice H."/>
            <person name="Bruce D."/>
            <person name="Goodwin L."/>
            <person name="Pitluck S."/>
            <person name="Schmutz J."/>
            <person name="Larimer F."/>
            <person name="Land M."/>
            <person name="Hauser L."/>
            <person name="Kyrpides N."/>
            <person name="Ovchinnikova G."/>
            <person name="Zhao F."/>
            <person name="Li T."/>
            <person name="Liu Z."/>
            <person name="Overmann J."/>
            <person name="Bryant D.A."/>
            <person name="Richardson P."/>
        </authorList>
    </citation>
    <scope>NUCLEOTIDE SEQUENCE [LARGE SCALE GENOMIC DNA]</scope>
    <source>
        <strain>DSM 245 / NBRC 103803 / 6330</strain>
    </source>
</reference>
<accession>B3EII6</accession>
<proteinExistence type="inferred from homology"/>
<evidence type="ECO:0000255" key="1">
    <source>
        <dbReference type="HAMAP-Rule" id="MF_00494"/>
    </source>
</evidence>
<comment type="function">
    <text evidence="1">Transaldolase is important for the balance of metabolites in the pentose-phosphate pathway.</text>
</comment>
<comment type="catalytic activity">
    <reaction evidence="1">
        <text>D-sedoheptulose 7-phosphate + D-glyceraldehyde 3-phosphate = D-erythrose 4-phosphate + beta-D-fructose 6-phosphate</text>
        <dbReference type="Rhea" id="RHEA:17053"/>
        <dbReference type="ChEBI" id="CHEBI:16897"/>
        <dbReference type="ChEBI" id="CHEBI:57483"/>
        <dbReference type="ChEBI" id="CHEBI:57634"/>
        <dbReference type="ChEBI" id="CHEBI:59776"/>
        <dbReference type="EC" id="2.2.1.2"/>
    </reaction>
</comment>
<comment type="pathway">
    <text evidence="1">Carbohydrate degradation; pentose phosphate pathway; D-glyceraldehyde 3-phosphate and beta-D-fructose 6-phosphate from D-ribose 5-phosphate and D-xylulose 5-phosphate (non-oxidative stage): step 2/3.</text>
</comment>
<comment type="subcellular location">
    <subcellularLocation>
        <location evidence="1">Cytoplasm</location>
    </subcellularLocation>
</comment>
<comment type="similarity">
    <text evidence="1">Belongs to the transaldolase family. Type 3B subfamily.</text>
</comment>
<feature type="chain" id="PRO_1000126287" description="Probable transaldolase">
    <location>
        <begin position="1"/>
        <end position="222"/>
    </location>
</feature>
<feature type="active site" description="Schiff-base intermediate with substrate" evidence="1">
    <location>
        <position position="91"/>
    </location>
</feature>
<organism>
    <name type="scientific">Chlorobium limicola (strain DSM 245 / NBRC 103803 / 6330)</name>
    <dbReference type="NCBI Taxonomy" id="290315"/>
    <lineage>
        <taxon>Bacteria</taxon>
        <taxon>Pseudomonadati</taxon>
        <taxon>Chlorobiota</taxon>
        <taxon>Chlorobiia</taxon>
        <taxon>Chlorobiales</taxon>
        <taxon>Chlorobiaceae</taxon>
        <taxon>Chlorobium/Pelodictyon group</taxon>
        <taxon>Chlorobium</taxon>
    </lineage>
</organism>
<gene>
    <name evidence="1" type="primary">tal</name>
    <name type="ordered locus">Clim_2479</name>
</gene>